<protein>
    <recommendedName>
        <fullName>Uncharacterized protein C13G1.09</fullName>
    </recommendedName>
</protein>
<sequence>MPKAPKTKLHHAPLYKDIAESSESGVLRQKPSKQKKSKESNTGNGFLDAKTSKKILQLAREQKEELDEEENGKPSQISAFISNGHQKDTLENPAIESSYEESEHARNVSDSESITSQEEEEYEELEIDDADRDLFDRFLPTVSGEEGDLTEEKTTSLSDLIMQKINEAEARARGEYIPSAEEEENALPPLPPKVIEVYSKVGVLLSKYRSGKIPKAFKIIPTLSNWEDILYLTRPDMWTPHACYEATRIFISNLKPVQAQHFLTVIILERVRDDIRENKKLNYHLYMALKKALYKPSSWFKGFLFPLVQENCTLREAAIIGSILQKVSVPVLHSAAALLRLTEFDLSGATSVFIRILLDKKYALPYKVLDSLVFYFMRWKSLERPLAVLEHQSMLVFAQRYKFDITPEQKDALLEVVRLKGHYSIGPEIRRELLNSASRGEEIPVEMEY</sequence>
<comment type="similarity">
    <text evidence="3">Belongs to the bystin family.</text>
</comment>
<evidence type="ECO:0000256" key="1">
    <source>
        <dbReference type="SAM" id="MobiDB-lite"/>
    </source>
</evidence>
<evidence type="ECO:0000269" key="2">
    <source>
    </source>
</evidence>
<evidence type="ECO:0000305" key="3"/>
<keyword id="KW-0597">Phosphoprotein</keyword>
<keyword id="KW-1185">Reference proteome</keyword>
<dbReference type="EMBL" id="CU329671">
    <property type="protein sequence ID" value="CAA18662.1"/>
    <property type="molecule type" value="Genomic_DNA"/>
</dbReference>
<dbReference type="PIR" id="T39410">
    <property type="entry name" value="T39410"/>
</dbReference>
<dbReference type="SMR" id="O60071"/>
<dbReference type="BioGRID" id="276433">
    <property type="interactions" value="14"/>
</dbReference>
<dbReference type="FunCoup" id="O60071">
    <property type="interactions" value="293"/>
</dbReference>
<dbReference type="STRING" id="284812.O60071"/>
<dbReference type="iPTMnet" id="O60071"/>
<dbReference type="PaxDb" id="4896-SPBC13G1.09.1"/>
<dbReference type="EnsemblFungi" id="SPBC13G1.09.1">
    <property type="protein sequence ID" value="SPBC13G1.09.1:pep"/>
    <property type="gene ID" value="SPBC13G1.09"/>
</dbReference>
<dbReference type="KEGG" id="spo:2539887"/>
<dbReference type="PomBase" id="SPBC13G1.09"/>
<dbReference type="VEuPathDB" id="FungiDB:SPBC13G1.09"/>
<dbReference type="eggNOG" id="KOG3871">
    <property type="taxonomic scope" value="Eukaryota"/>
</dbReference>
<dbReference type="HOGENOM" id="CLU_029727_0_1_1"/>
<dbReference type="InParanoid" id="O60071"/>
<dbReference type="OMA" id="TKLPVIW"/>
<dbReference type="PhylomeDB" id="O60071"/>
<dbReference type="PRO" id="PR:O60071"/>
<dbReference type="Proteomes" id="UP000002485">
    <property type="component" value="Chromosome II"/>
</dbReference>
<dbReference type="GO" id="GO:0005737">
    <property type="term" value="C:cytoplasm"/>
    <property type="evidence" value="ECO:0000318"/>
    <property type="project" value="GO_Central"/>
</dbReference>
<dbReference type="GO" id="GO:0005730">
    <property type="term" value="C:nucleolus"/>
    <property type="evidence" value="ECO:0000318"/>
    <property type="project" value="GO_Central"/>
</dbReference>
<dbReference type="GO" id="GO:0005634">
    <property type="term" value="C:nucleus"/>
    <property type="evidence" value="ECO:0007005"/>
    <property type="project" value="PomBase"/>
</dbReference>
<dbReference type="GO" id="GO:0030688">
    <property type="term" value="C:preribosome, small subunit precursor"/>
    <property type="evidence" value="ECO:0000318"/>
    <property type="project" value="GO_Central"/>
</dbReference>
<dbReference type="GO" id="GO:0030515">
    <property type="term" value="F:snoRNA binding"/>
    <property type="evidence" value="ECO:0000318"/>
    <property type="project" value="GO_Central"/>
</dbReference>
<dbReference type="GO" id="GO:0000447">
    <property type="term" value="P:endonucleolytic cleavage in ITS1 to separate SSU-rRNA from 5.8S rRNA and LSU-rRNA from tricistronic rRNA transcript (SSU-rRNA, 5.8S rRNA, LSU-rRNA)"/>
    <property type="evidence" value="ECO:0000266"/>
    <property type="project" value="PomBase"/>
</dbReference>
<dbReference type="GO" id="GO:0006364">
    <property type="term" value="P:rRNA processing"/>
    <property type="evidence" value="ECO:0000318"/>
    <property type="project" value="GO_Central"/>
</dbReference>
<dbReference type="InterPro" id="IPR007955">
    <property type="entry name" value="Bystin"/>
</dbReference>
<dbReference type="PANTHER" id="PTHR12821">
    <property type="entry name" value="BYSTIN"/>
    <property type="match status" value="1"/>
</dbReference>
<dbReference type="PANTHER" id="PTHR12821:SF0">
    <property type="entry name" value="BYSTIN"/>
    <property type="match status" value="1"/>
</dbReference>
<dbReference type="Pfam" id="PF05291">
    <property type="entry name" value="Bystin"/>
    <property type="match status" value="1"/>
</dbReference>
<reference key="1">
    <citation type="journal article" date="2002" name="Nature">
        <title>The genome sequence of Schizosaccharomyces pombe.</title>
        <authorList>
            <person name="Wood V."/>
            <person name="Gwilliam R."/>
            <person name="Rajandream M.A."/>
            <person name="Lyne M.H."/>
            <person name="Lyne R."/>
            <person name="Stewart A."/>
            <person name="Sgouros J.G."/>
            <person name="Peat N."/>
            <person name="Hayles J."/>
            <person name="Baker S.G."/>
            <person name="Basham D."/>
            <person name="Bowman S."/>
            <person name="Brooks K."/>
            <person name="Brown D."/>
            <person name="Brown S."/>
            <person name="Chillingworth T."/>
            <person name="Churcher C.M."/>
            <person name="Collins M."/>
            <person name="Connor R."/>
            <person name="Cronin A."/>
            <person name="Davis P."/>
            <person name="Feltwell T."/>
            <person name="Fraser A."/>
            <person name="Gentles S."/>
            <person name="Goble A."/>
            <person name="Hamlin N."/>
            <person name="Harris D.E."/>
            <person name="Hidalgo J."/>
            <person name="Hodgson G."/>
            <person name="Holroyd S."/>
            <person name="Hornsby T."/>
            <person name="Howarth S."/>
            <person name="Huckle E.J."/>
            <person name="Hunt S."/>
            <person name="Jagels K."/>
            <person name="James K.D."/>
            <person name="Jones L."/>
            <person name="Jones M."/>
            <person name="Leather S."/>
            <person name="McDonald S."/>
            <person name="McLean J."/>
            <person name="Mooney P."/>
            <person name="Moule S."/>
            <person name="Mungall K.L."/>
            <person name="Murphy L.D."/>
            <person name="Niblett D."/>
            <person name="Odell C."/>
            <person name="Oliver K."/>
            <person name="O'Neil S."/>
            <person name="Pearson D."/>
            <person name="Quail M.A."/>
            <person name="Rabbinowitsch E."/>
            <person name="Rutherford K.M."/>
            <person name="Rutter S."/>
            <person name="Saunders D."/>
            <person name="Seeger K."/>
            <person name="Sharp S."/>
            <person name="Skelton J."/>
            <person name="Simmonds M.N."/>
            <person name="Squares R."/>
            <person name="Squares S."/>
            <person name="Stevens K."/>
            <person name="Taylor K."/>
            <person name="Taylor R.G."/>
            <person name="Tivey A."/>
            <person name="Walsh S.V."/>
            <person name="Warren T."/>
            <person name="Whitehead S."/>
            <person name="Woodward J.R."/>
            <person name="Volckaert G."/>
            <person name="Aert R."/>
            <person name="Robben J."/>
            <person name="Grymonprez B."/>
            <person name="Weltjens I."/>
            <person name="Vanstreels E."/>
            <person name="Rieger M."/>
            <person name="Schaefer M."/>
            <person name="Mueller-Auer S."/>
            <person name="Gabel C."/>
            <person name="Fuchs M."/>
            <person name="Duesterhoeft A."/>
            <person name="Fritzc C."/>
            <person name="Holzer E."/>
            <person name="Moestl D."/>
            <person name="Hilbert H."/>
            <person name="Borzym K."/>
            <person name="Langer I."/>
            <person name="Beck A."/>
            <person name="Lehrach H."/>
            <person name="Reinhardt R."/>
            <person name="Pohl T.M."/>
            <person name="Eger P."/>
            <person name="Zimmermann W."/>
            <person name="Wedler H."/>
            <person name="Wambutt R."/>
            <person name="Purnelle B."/>
            <person name="Goffeau A."/>
            <person name="Cadieu E."/>
            <person name="Dreano S."/>
            <person name="Gloux S."/>
            <person name="Lelaure V."/>
            <person name="Mottier S."/>
            <person name="Galibert F."/>
            <person name="Aves S.J."/>
            <person name="Xiang Z."/>
            <person name="Hunt C."/>
            <person name="Moore K."/>
            <person name="Hurst S.M."/>
            <person name="Lucas M."/>
            <person name="Rochet M."/>
            <person name="Gaillardin C."/>
            <person name="Tallada V.A."/>
            <person name="Garzon A."/>
            <person name="Thode G."/>
            <person name="Daga R.R."/>
            <person name="Cruzado L."/>
            <person name="Jimenez J."/>
            <person name="Sanchez M."/>
            <person name="del Rey F."/>
            <person name="Benito J."/>
            <person name="Dominguez A."/>
            <person name="Revuelta J.L."/>
            <person name="Moreno S."/>
            <person name="Armstrong J."/>
            <person name="Forsburg S.L."/>
            <person name="Cerutti L."/>
            <person name="Lowe T."/>
            <person name="McCombie W.R."/>
            <person name="Paulsen I."/>
            <person name="Potashkin J."/>
            <person name="Shpakovski G.V."/>
            <person name="Ussery D."/>
            <person name="Barrell B.G."/>
            <person name="Nurse P."/>
        </authorList>
    </citation>
    <scope>NUCLEOTIDE SEQUENCE [LARGE SCALE GENOMIC DNA]</scope>
    <source>
        <strain>972 / ATCC 24843</strain>
    </source>
</reference>
<reference key="2">
    <citation type="journal article" date="2008" name="J. Proteome Res.">
        <title>Phosphoproteome analysis of fission yeast.</title>
        <authorList>
            <person name="Wilson-Grady J.T."/>
            <person name="Villen J."/>
            <person name="Gygi S.P."/>
        </authorList>
    </citation>
    <scope>PHOSPHORYLATION [LARGE SCALE ANALYSIS] AT SER-22 AND SER-156</scope>
    <scope>IDENTIFICATION BY MASS SPECTROMETRY</scope>
</reference>
<gene>
    <name type="ORF">SPBC13G1.09</name>
</gene>
<name>YBB9_SCHPO</name>
<feature type="chain" id="PRO_0000186119" description="Uncharacterized protein C13G1.09">
    <location>
        <begin position="1"/>
        <end position="449"/>
    </location>
</feature>
<feature type="region of interest" description="Disordered" evidence="1">
    <location>
        <begin position="1"/>
        <end position="125"/>
    </location>
</feature>
<feature type="compositionally biased region" description="Basic residues" evidence="1">
    <location>
        <begin position="1"/>
        <end position="13"/>
    </location>
</feature>
<feature type="compositionally biased region" description="Polar residues" evidence="1">
    <location>
        <begin position="73"/>
        <end position="84"/>
    </location>
</feature>
<feature type="modified residue" description="Phosphoserine" evidence="2">
    <location>
        <position position="22"/>
    </location>
</feature>
<feature type="modified residue" description="Phosphoserine" evidence="2">
    <location>
        <position position="156"/>
    </location>
</feature>
<accession>O60071</accession>
<proteinExistence type="evidence at protein level"/>
<organism>
    <name type="scientific">Schizosaccharomyces pombe (strain 972 / ATCC 24843)</name>
    <name type="common">Fission yeast</name>
    <dbReference type="NCBI Taxonomy" id="284812"/>
    <lineage>
        <taxon>Eukaryota</taxon>
        <taxon>Fungi</taxon>
        <taxon>Dikarya</taxon>
        <taxon>Ascomycota</taxon>
        <taxon>Taphrinomycotina</taxon>
        <taxon>Schizosaccharomycetes</taxon>
        <taxon>Schizosaccharomycetales</taxon>
        <taxon>Schizosaccharomycetaceae</taxon>
        <taxon>Schizosaccharomyces</taxon>
    </lineage>
</organism>